<comment type="function">
    <text evidence="1">F(1)F(0) ATP synthase produces ATP from ADP in the presence of a proton or sodium gradient. F-type ATPases consist of two structural domains, F(1) containing the extramembraneous catalytic core and F(0) containing the membrane proton channel, linked together by a central stalk and a peripheral stalk. During catalysis, ATP synthesis in the catalytic domain of F(1) is coupled via a rotary mechanism of the central stalk subunits to proton translocation.</text>
</comment>
<comment type="function">
    <text evidence="1">This protein is part of the stalk that links CF(0) to CF(1). It either transmits conformational changes from CF(0) to CF(1) or is implicated in proton conduction.</text>
</comment>
<comment type="subunit">
    <text evidence="1">F-type ATPases have 2 components, F(1) - the catalytic core - and F(0) - the membrane proton channel. F(1) has five subunits: alpha(3), beta(3), gamma(1), delta(1), epsilon(1). CF(0) has four main subunits: a(1), b(1), b'(1) and c(10-14). The alpha and beta chains form an alternating ring which encloses part of the gamma chain. F(1) is attached to F(0) by a central stalk formed by the gamma and epsilon chains, while a peripheral stalk is formed by the delta, b and b' chains.</text>
</comment>
<comment type="subcellular location">
    <subcellularLocation>
        <location evidence="1">Cellular thylakoid membrane</location>
        <topology evidence="1">Peripheral membrane protein</topology>
    </subcellularLocation>
</comment>
<comment type="similarity">
    <text evidence="1">Belongs to the ATPase delta chain family.</text>
</comment>
<dbReference type="EMBL" id="CT978603">
    <property type="protein sequence ID" value="CAK28782.1"/>
    <property type="molecule type" value="Genomic_DNA"/>
</dbReference>
<dbReference type="SMR" id="A5GV73"/>
<dbReference type="STRING" id="316278.SynRCC307_1879"/>
<dbReference type="KEGG" id="syr:SynRCC307_1879"/>
<dbReference type="eggNOG" id="COG0712">
    <property type="taxonomic scope" value="Bacteria"/>
</dbReference>
<dbReference type="HOGENOM" id="CLU_085114_4_0_3"/>
<dbReference type="OrthoDB" id="9802471at2"/>
<dbReference type="Proteomes" id="UP000001115">
    <property type="component" value="Chromosome"/>
</dbReference>
<dbReference type="GO" id="GO:0031676">
    <property type="term" value="C:plasma membrane-derived thylakoid membrane"/>
    <property type="evidence" value="ECO:0007669"/>
    <property type="project" value="UniProtKB-SubCell"/>
</dbReference>
<dbReference type="GO" id="GO:0045259">
    <property type="term" value="C:proton-transporting ATP synthase complex"/>
    <property type="evidence" value="ECO:0007669"/>
    <property type="project" value="UniProtKB-KW"/>
</dbReference>
<dbReference type="GO" id="GO:0046933">
    <property type="term" value="F:proton-transporting ATP synthase activity, rotational mechanism"/>
    <property type="evidence" value="ECO:0007669"/>
    <property type="project" value="UniProtKB-UniRule"/>
</dbReference>
<dbReference type="Gene3D" id="1.10.520.20">
    <property type="entry name" value="N-terminal domain of the delta subunit of the F1F0-ATP synthase"/>
    <property type="match status" value="1"/>
</dbReference>
<dbReference type="HAMAP" id="MF_01416">
    <property type="entry name" value="ATP_synth_delta_bact"/>
    <property type="match status" value="1"/>
</dbReference>
<dbReference type="InterPro" id="IPR026015">
    <property type="entry name" value="ATP_synth_OSCP/delta_N_sf"/>
</dbReference>
<dbReference type="InterPro" id="IPR020781">
    <property type="entry name" value="ATPase_OSCP/d_CS"/>
</dbReference>
<dbReference type="InterPro" id="IPR000711">
    <property type="entry name" value="ATPase_OSCP/dsu"/>
</dbReference>
<dbReference type="NCBIfam" id="TIGR01145">
    <property type="entry name" value="ATP_synt_delta"/>
    <property type="match status" value="1"/>
</dbReference>
<dbReference type="PANTHER" id="PTHR11910">
    <property type="entry name" value="ATP SYNTHASE DELTA CHAIN"/>
    <property type="match status" value="1"/>
</dbReference>
<dbReference type="Pfam" id="PF00213">
    <property type="entry name" value="OSCP"/>
    <property type="match status" value="1"/>
</dbReference>
<dbReference type="PRINTS" id="PR00125">
    <property type="entry name" value="ATPASEDELTA"/>
</dbReference>
<dbReference type="SUPFAM" id="SSF47928">
    <property type="entry name" value="N-terminal domain of the delta subunit of the F1F0-ATP synthase"/>
    <property type="match status" value="1"/>
</dbReference>
<dbReference type="PROSITE" id="PS00389">
    <property type="entry name" value="ATPASE_DELTA"/>
    <property type="match status" value="1"/>
</dbReference>
<proteinExistence type="inferred from homology"/>
<name>ATPD_SYNR3</name>
<keyword id="KW-0066">ATP synthesis</keyword>
<keyword id="KW-0139">CF(1)</keyword>
<keyword id="KW-0375">Hydrogen ion transport</keyword>
<keyword id="KW-0406">Ion transport</keyword>
<keyword id="KW-0472">Membrane</keyword>
<keyword id="KW-1185">Reference proteome</keyword>
<keyword id="KW-0793">Thylakoid</keyword>
<keyword id="KW-0813">Transport</keyword>
<evidence type="ECO:0000255" key="1">
    <source>
        <dbReference type="HAMAP-Rule" id="MF_01416"/>
    </source>
</evidence>
<feature type="chain" id="PRO_0000371180" description="ATP synthase subunit delta">
    <location>
        <begin position="1"/>
        <end position="181"/>
    </location>
</feature>
<organism>
    <name type="scientific">Synechococcus sp. (strain RCC307)</name>
    <dbReference type="NCBI Taxonomy" id="316278"/>
    <lineage>
        <taxon>Bacteria</taxon>
        <taxon>Bacillati</taxon>
        <taxon>Cyanobacteriota</taxon>
        <taxon>Cyanophyceae</taxon>
        <taxon>Synechococcales</taxon>
        <taxon>Synechococcaceae</taxon>
        <taxon>Synechococcus</taxon>
    </lineage>
</organism>
<protein>
    <recommendedName>
        <fullName evidence="1">ATP synthase subunit delta</fullName>
    </recommendedName>
    <alternativeName>
        <fullName evidence="1">ATP synthase F(1) sector subunit delta</fullName>
    </alternativeName>
    <alternativeName>
        <fullName evidence="1">F-type ATPase subunit delta</fullName>
        <shortName evidence="1">F-ATPase subunit delta</shortName>
    </alternativeName>
</protein>
<reference key="1">
    <citation type="submission" date="2006-05" db="EMBL/GenBank/DDBJ databases">
        <authorList>
            <consortium name="Genoscope"/>
        </authorList>
    </citation>
    <scope>NUCLEOTIDE SEQUENCE [LARGE SCALE GENOMIC DNA]</scope>
    <source>
        <strain>RCC307</strain>
    </source>
</reference>
<sequence length="181" mass="19558">MPLLNTLATPYADALLQVGESRKQSDALADEAKALLSAWSSSQDLQDAMRSPVLSVEGKKKALDSLFSESISPAMLNLLKLLADRQRIGMLDAVLERFLELYRELRGITLAYVTSATALSEQQQDKLTEKVKTVAGTTAVDIDLSVDPDLIGGFVVRLGSQVIDASLRGQVRQLGLSLARA</sequence>
<gene>
    <name evidence="1" type="primary">atpH</name>
    <name evidence="1" type="synonym">atpD</name>
    <name type="ordered locus">SynRCC307_1879</name>
</gene>
<accession>A5GV73</accession>